<proteinExistence type="inferred from homology"/>
<name>RS8_MYCTA</name>
<keyword id="KW-1185">Reference proteome</keyword>
<keyword id="KW-0687">Ribonucleoprotein</keyword>
<keyword id="KW-0689">Ribosomal protein</keyword>
<keyword id="KW-0694">RNA-binding</keyword>
<keyword id="KW-0699">rRNA-binding</keyword>
<dbReference type="EMBL" id="CP000611">
    <property type="protein sequence ID" value="ABQ72454.1"/>
    <property type="molecule type" value="Genomic_DNA"/>
</dbReference>
<dbReference type="RefSeq" id="WP_003403669.1">
    <property type="nucleotide sequence ID" value="NZ_CP016972.1"/>
</dbReference>
<dbReference type="SMR" id="A5U0A4"/>
<dbReference type="GeneID" id="45424683"/>
<dbReference type="KEGG" id="mra:MRA_0726"/>
<dbReference type="eggNOG" id="COG0096">
    <property type="taxonomic scope" value="Bacteria"/>
</dbReference>
<dbReference type="HOGENOM" id="CLU_098428_0_1_11"/>
<dbReference type="Proteomes" id="UP000001988">
    <property type="component" value="Chromosome"/>
</dbReference>
<dbReference type="GO" id="GO:1990904">
    <property type="term" value="C:ribonucleoprotein complex"/>
    <property type="evidence" value="ECO:0007669"/>
    <property type="project" value="UniProtKB-KW"/>
</dbReference>
<dbReference type="GO" id="GO:0005840">
    <property type="term" value="C:ribosome"/>
    <property type="evidence" value="ECO:0007669"/>
    <property type="project" value="UniProtKB-KW"/>
</dbReference>
<dbReference type="GO" id="GO:0019843">
    <property type="term" value="F:rRNA binding"/>
    <property type="evidence" value="ECO:0007669"/>
    <property type="project" value="UniProtKB-UniRule"/>
</dbReference>
<dbReference type="GO" id="GO:0003735">
    <property type="term" value="F:structural constituent of ribosome"/>
    <property type="evidence" value="ECO:0007669"/>
    <property type="project" value="InterPro"/>
</dbReference>
<dbReference type="GO" id="GO:0006412">
    <property type="term" value="P:translation"/>
    <property type="evidence" value="ECO:0007669"/>
    <property type="project" value="UniProtKB-UniRule"/>
</dbReference>
<dbReference type="FunFam" id="3.30.1370.30:FF:000002">
    <property type="entry name" value="30S ribosomal protein S8"/>
    <property type="match status" value="1"/>
</dbReference>
<dbReference type="FunFam" id="3.30.1490.10:FF:000001">
    <property type="entry name" value="30S ribosomal protein S8"/>
    <property type="match status" value="1"/>
</dbReference>
<dbReference type="Gene3D" id="3.30.1370.30">
    <property type="match status" value="1"/>
</dbReference>
<dbReference type="Gene3D" id="3.30.1490.10">
    <property type="match status" value="1"/>
</dbReference>
<dbReference type="HAMAP" id="MF_01302_B">
    <property type="entry name" value="Ribosomal_uS8_B"/>
    <property type="match status" value="1"/>
</dbReference>
<dbReference type="InterPro" id="IPR000630">
    <property type="entry name" value="Ribosomal_uS8"/>
</dbReference>
<dbReference type="InterPro" id="IPR047863">
    <property type="entry name" value="Ribosomal_uS8_CS"/>
</dbReference>
<dbReference type="InterPro" id="IPR035987">
    <property type="entry name" value="Ribosomal_uS8_sf"/>
</dbReference>
<dbReference type="NCBIfam" id="NF001109">
    <property type="entry name" value="PRK00136.1"/>
    <property type="match status" value="1"/>
</dbReference>
<dbReference type="PANTHER" id="PTHR11758">
    <property type="entry name" value="40S RIBOSOMAL PROTEIN S15A"/>
    <property type="match status" value="1"/>
</dbReference>
<dbReference type="Pfam" id="PF00410">
    <property type="entry name" value="Ribosomal_S8"/>
    <property type="match status" value="1"/>
</dbReference>
<dbReference type="SUPFAM" id="SSF56047">
    <property type="entry name" value="Ribosomal protein S8"/>
    <property type="match status" value="1"/>
</dbReference>
<dbReference type="PROSITE" id="PS00053">
    <property type="entry name" value="RIBOSOMAL_S8"/>
    <property type="match status" value="1"/>
</dbReference>
<sequence>MTMTDPIADFLTRLRNANSAYHDEVSLPHSKLKANIAQILKNEGYISDFRTEDARVGKSLVIQLKYGPSRERSIAGLRRVSKPGLRVYAKSTNLPRVLGGLGVAIISTSSGLLTDRQAARQGVGGEVLAYVW</sequence>
<gene>
    <name evidence="1" type="primary">rpsH</name>
    <name type="ordered locus">MRA_0726</name>
</gene>
<feature type="chain" id="PRO_0000305751" description="Small ribosomal subunit protein uS8">
    <location>
        <begin position="1"/>
        <end position="132"/>
    </location>
</feature>
<protein>
    <recommendedName>
        <fullName evidence="1">Small ribosomal subunit protein uS8</fullName>
    </recommendedName>
    <alternativeName>
        <fullName evidence="2">30S ribosomal protein S8</fullName>
    </alternativeName>
</protein>
<organism>
    <name type="scientific">Mycobacterium tuberculosis (strain ATCC 25177 / H37Ra)</name>
    <dbReference type="NCBI Taxonomy" id="419947"/>
    <lineage>
        <taxon>Bacteria</taxon>
        <taxon>Bacillati</taxon>
        <taxon>Actinomycetota</taxon>
        <taxon>Actinomycetes</taxon>
        <taxon>Mycobacteriales</taxon>
        <taxon>Mycobacteriaceae</taxon>
        <taxon>Mycobacterium</taxon>
        <taxon>Mycobacterium tuberculosis complex</taxon>
    </lineage>
</organism>
<accession>A5U0A4</accession>
<evidence type="ECO:0000255" key="1">
    <source>
        <dbReference type="HAMAP-Rule" id="MF_01302"/>
    </source>
</evidence>
<evidence type="ECO:0000305" key="2"/>
<reference key="1">
    <citation type="journal article" date="2008" name="PLoS ONE">
        <title>Genetic basis of virulence attenuation revealed by comparative genomic analysis of Mycobacterium tuberculosis strain H37Ra versus H37Rv.</title>
        <authorList>
            <person name="Zheng H."/>
            <person name="Lu L."/>
            <person name="Wang B."/>
            <person name="Pu S."/>
            <person name="Zhang X."/>
            <person name="Zhu G."/>
            <person name="Shi W."/>
            <person name="Zhang L."/>
            <person name="Wang H."/>
            <person name="Wang S."/>
            <person name="Zhao G."/>
            <person name="Zhang Y."/>
        </authorList>
    </citation>
    <scope>NUCLEOTIDE SEQUENCE [LARGE SCALE GENOMIC DNA]</scope>
    <source>
        <strain>ATCC 25177 / H37Ra</strain>
    </source>
</reference>
<comment type="function">
    <text evidence="1">One of the primary rRNA binding proteins, it binds directly to 16S rRNA central domain where it helps coordinate assembly of the platform of the 30S subunit.</text>
</comment>
<comment type="subunit">
    <text evidence="1">Part of the 30S ribosomal subunit. Contacts proteins S5 and S12.</text>
</comment>
<comment type="similarity">
    <text evidence="1">Belongs to the universal ribosomal protein uS8 family.</text>
</comment>